<sequence>MLAVLLFAALVATAYSQSNYGPGKPDVKIIPHPKTVVHEDARHVHKQVHLVKQVPVHRTRVQTIINEVPRIVTKPKKIKRTRIFRQYYPVDVPVIRRVTYLQPVHLERKVPVARMVVKDVPHHVVRTKKVDVPIDVPIKKIVEKKVVRYVENKIFRPRPVVQEKVRVVHVPKPFPVDRVIVQKNPRPRIIVEKKAVPVIRHIHTHKKQAVAVPRVKTVAEVVPNVVHQKVTYPVGKGGGSVQIPGGPLPVPEKF</sequence>
<evidence type="ECO:0000250" key="1">
    <source>
        <dbReference type="UniProtKB" id="P86948"/>
    </source>
</evidence>
<evidence type="ECO:0000255" key="2"/>
<evidence type="ECO:0000269" key="3">
    <source>
    </source>
</evidence>
<evidence type="ECO:0000305" key="4"/>
<protein>
    <recommendedName>
        <fullName evidence="1">Mantle protein</fullName>
        <shortName evidence="1">MP</shortName>
    </recommendedName>
</protein>
<accession>H2A0K7</accession>
<proteinExistence type="evidence at protein level"/>
<dbReference type="EMBL" id="HE610374">
    <property type="protein sequence ID" value="CCE46148.1"/>
    <property type="molecule type" value="mRNA"/>
</dbReference>
<dbReference type="SMR" id="H2A0K7"/>
<dbReference type="GO" id="GO:0005576">
    <property type="term" value="C:extracellular region"/>
    <property type="evidence" value="ECO:0007669"/>
    <property type="project" value="UniProtKB-SubCell"/>
</dbReference>
<feature type="signal peptide" evidence="2">
    <location>
        <begin position="1"/>
        <end position="16"/>
    </location>
</feature>
<feature type="chain" id="PRO_0000417977" description="Mantle protein" evidence="2">
    <location>
        <begin position="17"/>
        <end position="254"/>
    </location>
</feature>
<reference evidence="4" key="1">
    <citation type="journal article" date="2010" name="BMC Genomics">
        <title>Transcriptome and proteome analysis of Pinctada margaritifera calcifying mantle and shell: focus on biomineralization.</title>
        <authorList>
            <person name="Joubert C."/>
            <person name="Piquemal D."/>
            <person name="Marie B."/>
            <person name="Manchon L."/>
            <person name="Pierrat F."/>
            <person name="Zanella-Cleon I."/>
            <person name="Cochennec-Laureau N."/>
            <person name="Gueguen Y."/>
            <person name="Montagnani C."/>
        </authorList>
    </citation>
    <scope>NUCLEOTIDE SEQUENCE [MRNA]</scope>
    <scope>IDENTIFICATION</scope>
    <source>
        <tissue>Mantle</tissue>
    </source>
</reference>
<reference key="2">
    <citation type="journal article" date="2012" name="Proc. Natl. Acad. Sci. U.S.A.">
        <title>Different secretory repertoires control the biomineralization processes of prism and nacre deposition of the pearl oyster shell.</title>
        <authorList>
            <person name="Marie B."/>
            <person name="Joubert C."/>
            <person name="Tayale A."/>
            <person name="Zanella-Cleon I."/>
            <person name="Belliard C."/>
            <person name="Piquemal D."/>
            <person name="Cochennec-Laureau N."/>
            <person name="Marin F."/>
            <person name="Gueguen Y."/>
            <person name="Montagnani C."/>
        </authorList>
    </citation>
    <scope>PROTEIN SEQUENCE OF 35-42; 61-70; 119-126; 129-140 AND 217-229</scope>
    <scope>SUBCELLULAR LOCATION</scope>
    <scope>TISSUE SPECIFICITY</scope>
    <source>
        <tissue>Shell</tissue>
    </source>
</reference>
<organism>
    <name type="scientific">Margaritifera margaritifera</name>
    <name type="common">Freshwater pearl mussel</name>
    <dbReference type="NCBI Taxonomy" id="102329"/>
    <lineage>
        <taxon>Eukaryota</taxon>
        <taxon>Metazoa</taxon>
        <taxon>Spiralia</taxon>
        <taxon>Lophotrochozoa</taxon>
        <taxon>Mollusca</taxon>
        <taxon>Bivalvia</taxon>
        <taxon>Autobranchia</taxon>
        <taxon>Pteriomorphia</taxon>
        <taxon>Pterioida</taxon>
        <taxon>Pterioidea</taxon>
        <taxon>Pteriidae</taxon>
        <taxon>Pinctada</taxon>
    </lineage>
</organism>
<comment type="subcellular location">
    <subcellularLocation>
        <location evidence="3">Secreted</location>
    </subcellularLocation>
</comment>
<comment type="tissue specificity">
    <text evidence="3">Prismatic layer of shell (at protein level). Expressed primarily in the mantle with highest level in the outer epithelium of the mantle edge and lower level in the mantle pallium.</text>
</comment>
<keyword id="KW-0903">Direct protein sequencing</keyword>
<keyword id="KW-0964">Secreted</keyword>
<keyword id="KW-0732">Signal</keyword>
<name>MP_PINMG</name>